<proteinExistence type="inferred from homology"/>
<evidence type="ECO:0000255" key="1">
    <source>
        <dbReference type="HAMAP-Rule" id="MF_01456"/>
    </source>
</evidence>
<organism>
    <name type="scientific">Edwardsiella ictaluri (strain 93-146)</name>
    <dbReference type="NCBI Taxonomy" id="634503"/>
    <lineage>
        <taxon>Bacteria</taxon>
        <taxon>Pseudomonadati</taxon>
        <taxon>Pseudomonadota</taxon>
        <taxon>Gammaproteobacteria</taxon>
        <taxon>Enterobacterales</taxon>
        <taxon>Hafniaceae</taxon>
        <taxon>Edwardsiella</taxon>
    </lineage>
</organism>
<name>NUOK_EDWI9</name>
<accession>C5B8H7</accession>
<dbReference type="EC" id="7.1.1.-" evidence="1"/>
<dbReference type="EMBL" id="CP001600">
    <property type="protein sequence ID" value="ACR69838.1"/>
    <property type="molecule type" value="Genomic_DNA"/>
</dbReference>
<dbReference type="RefSeq" id="WP_012849206.1">
    <property type="nucleotide sequence ID" value="NZ_CP169062.1"/>
</dbReference>
<dbReference type="SMR" id="C5B8H7"/>
<dbReference type="STRING" id="67780.B6E78_05350"/>
<dbReference type="GeneID" id="72529162"/>
<dbReference type="KEGG" id="eic:NT01EI_2670"/>
<dbReference type="HOGENOM" id="CLU_144724_0_1_6"/>
<dbReference type="OrthoDB" id="9801357at2"/>
<dbReference type="Proteomes" id="UP000001485">
    <property type="component" value="Chromosome"/>
</dbReference>
<dbReference type="GO" id="GO:0030964">
    <property type="term" value="C:NADH dehydrogenase complex"/>
    <property type="evidence" value="ECO:0007669"/>
    <property type="project" value="TreeGrafter"/>
</dbReference>
<dbReference type="GO" id="GO:0005886">
    <property type="term" value="C:plasma membrane"/>
    <property type="evidence" value="ECO:0007669"/>
    <property type="project" value="UniProtKB-SubCell"/>
</dbReference>
<dbReference type="GO" id="GO:0050136">
    <property type="term" value="F:NADH:ubiquinone reductase (non-electrogenic) activity"/>
    <property type="evidence" value="ECO:0007669"/>
    <property type="project" value="UniProtKB-UniRule"/>
</dbReference>
<dbReference type="GO" id="GO:0048038">
    <property type="term" value="F:quinone binding"/>
    <property type="evidence" value="ECO:0007669"/>
    <property type="project" value="UniProtKB-KW"/>
</dbReference>
<dbReference type="GO" id="GO:0042773">
    <property type="term" value="P:ATP synthesis coupled electron transport"/>
    <property type="evidence" value="ECO:0007669"/>
    <property type="project" value="InterPro"/>
</dbReference>
<dbReference type="FunFam" id="1.10.287.3510:FF:000001">
    <property type="entry name" value="NADH-quinone oxidoreductase subunit K"/>
    <property type="match status" value="1"/>
</dbReference>
<dbReference type="Gene3D" id="1.10.287.3510">
    <property type="match status" value="1"/>
</dbReference>
<dbReference type="HAMAP" id="MF_01456">
    <property type="entry name" value="NDH1_NuoK"/>
    <property type="match status" value="1"/>
</dbReference>
<dbReference type="InterPro" id="IPR001133">
    <property type="entry name" value="NADH_UbQ_OxRdtase_chain4L/K"/>
</dbReference>
<dbReference type="InterPro" id="IPR039428">
    <property type="entry name" value="NUOK/Mnh_C1-like"/>
</dbReference>
<dbReference type="NCBIfam" id="NF004319">
    <property type="entry name" value="PRK05715.1-1"/>
    <property type="match status" value="1"/>
</dbReference>
<dbReference type="NCBIfam" id="NF004320">
    <property type="entry name" value="PRK05715.1-2"/>
    <property type="match status" value="1"/>
</dbReference>
<dbReference type="PANTHER" id="PTHR11434:SF16">
    <property type="entry name" value="NADH-UBIQUINONE OXIDOREDUCTASE CHAIN 4L"/>
    <property type="match status" value="1"/>
</dbReference>
<dbReference type="PANTHER" id="PTHR11434">
    <property type="entry name" value="NADH-UBIQUINONE OXIDOREDUCTASE SUBUNIT ND4L"/>
    <property type="match status" value="1"/>
</dbReference>
<dbReference type="Pfam" id="PF00420">
    <property type="entry name" value="Oxidored_q2"/>
    <property type="match status" value="1"/>
</dbReference>
<protein>
    <recommendedName>
        <fullName evidence="1">NADH-quinone oxidoreductase subunit K</fullName>
        <ecNumber evidence="1">7.1.1.-</ecNumber>
    </recommendedName>
    <alternativeName>
        <fullName evidence="1">NADH dehydrogenase I subunit K</fullName>
    </alternativeName>
    <alternativeName>
        <fullName evidence="1">NDH-1 subunit K</fullName>
    </alternativeName>
</protein>
<feature type="chain" id="PRO_0000390035" description="NADH-quinone oxidoreductase subunit K">
    <location>
        <begin position="1"/>
        <end position="100"/>
    </location>
</feature>
<feature type="transmembrane region" description="Helical" evidence="1">
    <location>
        <begin position="4"/>
        <end position="24"/>
    </location>
</feature>
<feature type="transmembrane region" description="Helical" evidence="1">
    <location>
        <begin position="28"/>
        <end position="48"/>
    </location>
</feature>
<feature type="transmembrane region" description="Helical" evidence="1">
    <location>
        <begin position="60"/>
        <end position="80"/>
    </location>
</feature>
<keyword id="KW-0997">Cell inner membrane</keyword>
<keyword id="KW-1003">Cell membrane</keyword>
<keyword id="KW-0472">Membrane</keyword>
<keyword id="KW-0520">NAD</keyword>
<keyword id="KW-0874">Quinone</keyword>
<keyword id="KW-1278">Translocase</keyword>
<keyword id="KW-0812">Transmembrane</keyword>
<keyword id="KW-1133">Transmembrane helix</keyword>
<keyword id="KW-0813">Transport</keyword>
<keyword id="KW-0830">Ubiquinone</keyword>
<gene>
    <name evidence="1" type="primary">nuoK</name>
    <name type="ordered locus">NT01EI_2670</name>
</gene>
<comment type="function">
    <text evidence="1">NDH-1 shuttles electrons from NADH, via FMN and iron-sulfur (Fe-S) centers, to quinones in the respiratory chain. The immediate electron acceptor for the enzyme in this species is believed to be ubiquinone. Couples the redox reaction to proton translocation (for every two electrons transferred, four hydrogen ions are translocated across the cytoplasmic membrane), and thus conserves the redox energy in a proton gradient.</text>
</comment>
<comment type="catalytic activity">
    <reaction evidence="1">
        <text>a quinone + NADH + 5 H(+)(in) = a quinol + NAD(+) + 4 H(+)(out)</text>
        <dbReference type="Rhea" id="RHEA:57888"/>
        <dbReference type="ChEBI" id="CHEBI:15378"/>
        <dbReference type="ChEBI" id="CHEBI:24646"/>
        <dbReference type="ChEBI" id="CHEBI:57540"/>
        <dbReference type="ChEBI" id="CHEBI:57945"/>
        <dbReference type="ChEBI" id="CHEBI:132124"/>
    </reaction>
</comment>
<comment type="subunit">
    <text evidence="1">NDH-1 is composed of 13 different subunits. Subunits NuoA, H, J, K, L, M, N constitute the membrane sector of the complex.</text>
</comment>
<comment type="subcellular location">
    <subcellularLocation>
        <location evidence="1">Cell inner membrane</location>
        <topology evidence="1">Multi-pass membrane protein</topology>
    </subcellularLocation>
</comment>
<comment type="similarity">
    <text evidence="1">Belongs to the complex I subunit 4L family.</text>
</comment>
<sequence length="100" mass="10738">MIPLQHGLILAAILFALGLTGLLIRRNLLFMLISLEIMINAAALAFVVAGSVWGQADGQVMYILAISLAAAEASIGLALLLQLHRRRNTLNIDTVSEMRG</sequence>
<reference key="1">
    <citation type="submission" date="2009-03" db="EMBL/GenBank/DDBJ databases">
        <title>Complete genome sequence of Edwardsiella ictaluri 93-146.</title>
        <authorList>
            <person name="Williams M.L."/>
            <person name="Gillaspy A.F."/>
            <person name="Dyer D.W."/>
            <person name="Thune R.L."/>
            <person name="Waldbieser G.C."/>
            <person name="Schuster S.C."/>
            <person name="Gipson J."/>
            <person name="Zaitshik J."/>
            <person name="Landry C."/>
            <person name="Lawrence M.L."/>
        </authorList>
    </citation>
    <scope>NUCLEOTIDE SEQUENCE [LARGE SCALE GENOMIC DNA]</scope>
    <source>
        <strain>93-146</strain>
    </source>
</reference>